<feature type="chain" id="PRO_1000023191" description="Thymidylate kinase">
    <location>
        <begin position="1"/>
        <end position="212"/>
    </location>
</feature>
<feature type="binding site" evidence="1">
    <location>
        <begin position="10"/>
        <end position="17"/>
    </location>
    <ligand>
        <name>ATP</name>
        <dbReference type="ChEBI" id="CHEBI:30616"/>
    </ligand>
</feature>
<dbReference type="EC" id="2.7.4.9" evidence="1"/>
<dbReference type="EMBL" id="CP000783">
    <property type="protein sequence ID" value="ABU77495.1"/>
    <property type="molecule type" value="Genomic_DNA"/>
</dbReference>
<dbReference type="RefSeq" id="WP_007888922.1">
    <property type="nucleotide sequence ID" value="NC_009778.1"/>
</dbReference>
<dbReference type="SMR" id="A7MFR1"/>
<dbReference type="KEGG" id="esa:ESA_02246"/>
<dbReference type="HOGENOM" id="CLU_049131_0_1_6"/>
<dbReference type="Proteomes" id="UP000000260">
    <property type="component" value="Chromosome"/>
</dbReference>
<dbReference type="GO" id="GO:0005829">
    <property type="term" value="C:cytosol"/>
    <property type="evidence" value="ECO:0007669"/>
    <property type="project" value="TreeGrafter"/>
</dbReference>
<dbReference type="GO" id="GO:0005524">
    <property type="term" value="F:ATP binding"/>
    <property type="evidence" value="ECO:0007669"/>
    <property type="project" value="UniProtKB-UniRule"/>
</dbReference>
<dbReference type="GO" id="GO:0004798">
    <property type="term" value="F:dTMP kinase activity"/>
    <property type="evidence" value="ECO:0007669"/>
    <property type="project" value="UniProtKB-UniRule"/>
</dbReference>
<dbReference type="GO" id="GO:0006233">
    <property type="term" value="P:dTDP biosynthetic process"/>
    <property type="evidence" value="ECO:0007669"/>
    <property type="project" value="InterPro"/>
</dbReference>
<dbReference type="GO" id="GO:0006235">
    <property type="term" value="P:dTTP biosynthetic process"/>
    <property type="evidence" value="ECO:0007669"/>
    <property type="project" value="UniProtKB-UniRule"/>
</dbReference>
<dbReference type="GO" id="GO:0006227">
    <property type="term" value="P:dUDP biosynthetic process"/>
    <property type="evidence" value="ECO:0007669"/>
    <property type="project" value="TreeGrafter"/>
</dbReference>
<dbReference type="CDD" id="cd01672">
    <property type="entry name" value="TMPK"/>
    <property type="match status" value="1"/>
</dbReference>
<dbReference type="FunFam" id="3.40.50.300:FF:000321">
    <property type="entry name" value="Thymidylate kinase"/>
    <property type="match status" value="1"/>
</dbReference>
<dbReference type="Gene3D" id="3.40.50.300">
    <property type="entry name" value="P-loop containing nucleotide triphosphate hydrolases"/>
    <property type="match status" value="1"/>
</dbReference>
<dbReference type="HAMAP" id="MF_00165">
    <property type="entry name" value="Thymidylate_kinase"/>
    <property type="match status" value="1"/>
</dbReference>
<dbReference type="InterPro" id="IPR027417">
    <property type="entry name" value="P-loop_NTPase"/>
</dbReference>
<dbReference type="InterPro" id="IPR039430">
    <property type="entry name" value="Thymidylate_kin-like_dom"/>
</dbReference>
<dbReference type="InterPro" id="IPR018095">
    <property type="entry name" value="Thymidylate_kin_CS"/>
</dbReference>
<dbReference type="InterPro" id="IPR018094">
    <property type="entry name" value="Thymidylate_kinase"/>
</dbReference>
<dbReference type="NCBIfam" id="TIGR00041">
    <property type="entry name" value="DTMP_kinase"/>
    <property type="match status" value="1"/>
</dbReference>
<dbReference type="PANTHER" id="PTHR10344">
    <property type="entry name" value="THYMIDYLATE KINASE"/>
    <property type="match status" value="1"/>
</dbReference>
<dbReference type="PANTHER" id="PTHR10344:SF4">
    <property type="entry name" value="UMP-CMP KINASE 2, MITOCHONDRIAL"/>
    <property type="match status" value="1"/>
</dbReference>
<dbReference type="Pfam" id="PF02223">
    <property type="entry name" value="Thymidylate_kin"/>
    <property type="match status" value="1"/>
</dbReference>
<dbReference type="SUPFAM" id="SSF52540">
    <property type="entry name" value="P-loop containing nucleoside triphosphate hydrolases"/>
    <property type="match status" value="1"/>
</dbReference>
<dbReference type="PROSITE" id="PS01331">
    <property type="entry name" value="THYMIDYLATE_KINASE"/>
    <property type="match status" value="1"/>
</dbReference>
<keyword id="KW-0067">ATP-binding</keyword>
<keyword id="KW-0418">Kinase</keyword>
<keyword id="KW-0545">Nucleotide biosynthesis</keyword>
<keyword id="KW-0547">Nucleotide-binding</keyword>
<keyword id="KW-1185">Reference proteome</keyword>
<keyword id="KW-0808">Transferase</keyword>
<reference key="1">
    <citation type="journal article" date="2010" name="PLoS ONE">
        <title>Genome sequence of Cronobacter sakazakii BAA-894 and comparative genomic hybridization analysis with other Cronobacter species.</title>
        <authorList>
            <person name="Kucerova E."/>
            <person name="Clifton S.W."/>
            <person name="Xia X.Q."/>
            <person name="Long F."/>
            <person name="Porwollik S."/>
            <person name="Fulton L."/>
            <person name="Fronick C."/>
            <person name="Minx P."/>
            <person name="Kyung K."/>
            <person name="Warren W."/>
            <person name="Fulton R."/>
            <person name="Feng D."/>
            <person name="Wollam A."/>
            <person name="Shah N."/>
            <person name="Bhonagiri V."/>
            <person name="Nash W.E."/>
            <person name="Hallsworth-Pepin K."/>
            <person name="Wilson R.K."/>
            <person name="McClelland M."/>
            <person name="Forsythe S.J."/>
        </authorList>
    </citation>
    <scope>NUCLEOTIDE SEQUENCE [LARGE SCALE GENOMIC DNA]</scope>
    <source>
        <strain>ATCC BAA-894</strain>
    </source>
</reference>
<sequence>MSSKYIVIEGLEGAGKTTARNLVVETLKSLGVTDMTFTREPGGTVLAEKLRSLVLDIKSVGDEVITDNAEVLLFYAARVQLVETVIKPALARGEWVIGDRHDLSTQAYQGGGRGIDRQLLATLRQAVLGDFAPDLTLYLDVDPRIGLERARARGELDRIEQESLDFFNRTRARYLELAAADPRIITIDACQPLEAVSHDIRATVTRWVQEQQ</sequence>
<organism>
    <name type="scientific">Cronobacter sakazakii (strain ATCC BAA-894)</name>
    <name type="common">Enterobacter sakazakii</name>
    <dbReference type="NCBI Taxonomy" id="290339"/>
    <lineage>
        <taxon>Bacteria</taxon>
        <taxon>Pseudomonadati</taxon>
        <taxon>Pseudomonadota</taxon>
        <taxon>Gammaproteobacteria</taxon>
        <taxon>Enterobacterales</taxon>
        <taxon>Enterobacteriaceae</taxon>
        <taxon>Cronobacter</taxon>
    </lineage>
</organism>
<comment type="function">
    <text evidence="1">Phosphorylation of dTMP to form dTDP in both de novo and salvage pathways of dTTP synthesis.</text>
</comment>
<comment type="catalytic activity">
    <reaction evidence="1">
        <text>dTMP + ATP = dTDP + ADP</text>
        <dbReference type="Rhea" id="RHEA:13517"/>
        <dbReference type="ChEBI" id="CHEBI:30616"/>
        <dbReference type="ChEBI" id="CHEBI:58369"/>
        <dbReference type="ChEBI" id="CHEBI:63528"/>
        <dbReference type="ChEBI" id="CHEBI:456216"/>
        <dbReference type="EC" id="2.7.4.9"/>
    </reaction>
</comment>
<comment type="similarity">
    <text evidence="1">Belongs to the thymidylate kinase family.</text>
</comment>
<protein>
    <recommendedName>
        <fullName evidence="1">Thymidylate kinase</fullName>
        <ecNumber evidence="1">2.7.4.9</ecNumber>
    </recommendedName>
    <alternativeName>
        <fullName evidence="1">dTMP kinase</fullName>
    </alternativeName>
</protein>
<name>KTHY_CROS8</name>
<gene>
    <name evidence="1" type="primary">tmk</name>
    <name type="ordered locus">ESA_02246</name>
</gene>
<evidence type="ECO:0000255" key="1">
    <source>
        <dbReference type="HAMAP-Rule" id="MF_00165"/>
    </source>
</evidence>
<proteinExistence type="inferred from homology"/>
<accession>A7MFR1</accession>